<dbReference type="EC" id="1.-.-.-" evidence="4"/>
<dbReference type="EMBL" id="KY683778">
    <property type="protein sequence ID" value="ARE72240.1"/>
    <property type="molecule type" value="mRNA"/>
</dbReference>
<dbReference type="SMR" id="A0A1V0QSB7"/>
<dbReference type="BioCyc" id="MetaCyc:MONOMER-124258"/>
<dbReference type="GO" id="GO:0016020">
    <property type="term" value="C:membrane"/>
    <property type="evidence" value="ECO:0007669"/>
    <property type="project" value="UniProtKB-SubCell"/>
</dbReference>
<dbReference type="GO" id="GO:0020037">
    <property type="term" value="F:heme binding"/>
    <property type="evidence" value="ECO:0007669"/>
    <property type="project" value="InterPro"/>
</dbReference>
<dbReference type="GO" id="GO:0005506">
    <property type="term" value="F:iron ion binding"/>
    <property type="evidence" value="ECO:0007669"/>
    <property type="project" value="InterPro"/>
</dbReference>
<dbReference type="GO" id="GO:0004497">
    <property type="term" value="F:monooxygenase activity"/>
    <property type="evidence" value="ECO:0007669"/>
    <property type="project" value="UniProtKB-KW"/>
</dbReference>
<dbReference type="GO" id="GO:0016705">
    <property type="term" value="F:oxidoreductase activity, acting on paired donors, with incorporation or reduction of molecular oxygen"/>
    <property type="evidence" value="ECO:0007669"/>
    <property type="project" value="InterPro"/>
</dbReference>
<dbReference type="CDD" id="cd11065">
    <property type="entry name" value="CYP64-like"/>
    <property type="match status" value="1"/>
</dbReference>
<dbReference type="Gene3D" id="1.10.630.10">
    <property type="entry name" value="Cytochrome P450"/>
    <property type="match status" value="1"/>
</dbReference>
<dbReference type="InterPro" id="IPR001128">
    <property type="entry name" value="Cyt_P450"/>
</dbReference>
<dbReference type="InterPro" id="IPR017972">
    <property type="entry name" value="Cyt_P450_CS"/>
</dbReference>
<dbReference type="InterPro" id="IPR002401">
    <property type="entry name" value="Cyt_P450_E_grp-I"/>
</dbReference>
<dbReference type="InterPro" id="IPR036396">
    <property type="entry name" value="Cyt_P450_sf"/>
</dbReference>
<dbReference type="InterPro" id="IPR050364">
    <property type="entry name" value="Cytochrome_P450_fung"/>
</dbReference>
<dbReference type="PANTHER" id="PTHR46300:SF7">
    <property type="entry name" value="P450, PUTATIVE (EUROFUNG)-RELATED"/>
    <property type="match status" value="1"/>
</dbReference>
<dbReference type="PANTHER" id="PTHR46300">
    <property type="entry name" value="P450, PUTATIVE (EUROFUNG)-RELATED-RELATED"/>
    <property type="match status" value="1"/>
</dbReference>
<dbReference type="Pfam" id="PF00067">
    <property type="entry name" value="p450"/>
    <property type="match status" value="1"/>
</dbReference>
<dbReference type="PRINTS" id="PR00463">
    <property type="entry name" value="EP450I"/>
</dbReference>
<dbReference type="SUPFAM" id="SSF48264">
    <property type="entry name" value="Cytochrome P450"/>
    <property type="match status" value="1"/>
</dbReference>
<dbReference type="PROSITE" id="PS00086">
    <property type="entry name" value="CYTOCHROME_P450"/>
    <property type="match status" value="1"/>
</dbReference>
<gene>
    <name evidence="5" type="primary">eriC</name>
</gene>
<feature type="chain" id="PRO_0000452919" description="Cytochrome P450 monooxyhenase eriC">
    <location>
        <begin position="1"/>
        <end position="511"/>
    </location>
</feature>
<feature type="transmembrane region" description="Helical" evidence="2">
    <location>
        <begin position="2"/>
        <end position="22"/>
    </location>
</feature>
<feature type="binding site" description="axial binding residue" evidence="1">
    <location>
        <position position="445"/>
    </location>
    <ligand>
        <name>heme</name>
        <dbReference type="ChEBI" id="CHEBI:30413"/>
    </ligand>
    <ligandPart>
        <name>Fe</name>
        <dbReference type="ChEBI" id="CHEBI:18248"/>
    </ligandPart>
</feature>
<proteinExistence type="evidence at protein level"/>
<sequence length="511" mass="57100">MVLADFISIPTVSIACLAVLGIAYHRHQSNKNTRRPPGPKGYPFIGNLLELVSAERPHLLFPLWIKQYGDIVRFTVFGVENILISKFSTAIELLEKRGAIYSDRPHMVLENEILGWDAAMPTMRYGAQFRKHRKLSNALLNPNAARGYIAIHEEVSLRLLSALAAQPDQFYHHILIYATSTIFRISYDIDITDDKHDLVRLANGAVRKSAEAYQASGALVDVFPSLKWLYNSYPTTAPFSGYRKVIEDIKGEVVQANNIPYEMAKEKMRDGSATRSLVSDAITGLGGLDAISPADEHDIRGLAGILYAGQETTMVTITNTILAMIHHPEVQRKAQAEIDAVVPLDRLPTLDDRANIPYLEAFVKEAYRWACPLIIAIPHTVIQDDVYEGYFIPKGTSIIASIYDMLNQCPNAAAFNPDRFIDGTDLGDVPPDPRDVVFGFGRRRCPGLHVADNSVWAALAQLLASFEFLPELVDGKEVLPPLKWGKEMARHPQPYRCRIVPRENRKHCYAA</sequence>
<protein>
    <recommendedName>
        <fullName evidence="5">Cytochrome P450 monooxyhenase eriC</fullName>
        <ecNumber evidence="4">1.-.-.-</ecNumber>
    </recommendedName>
    <alternativeName>
        <fullName evidence="5">Erinacine biosynthesis cluster protein C</fullName>
    </alternativeName>
</protein>
<reference key="1">
    <citation type="journal article" date="2017" name="Angew. Chem. Int. Ed.">
        <title>Discovery and characterization of a new family of diterpene cyclases in bacteria and fungi.</title>
        <authorList>
            <person name="Yang Y.L."/>
            <person name="Zhang S."/>
            <person name="Ma K."/>
            <person name="Xu Y."/>
            <person name="Tao Q."/>
            <person name="Chen Y."/>
            <person name="Chen J."/>
            <person name="Guo S."/>
            <person name="Ren J."/>
            <person name="Wang W."/>
            <person name="Tao Y."/>
            <person name="Yin W.B."/>
            <person name="Liu H."/>
        </authorList>
    </citation>
    <scope>NUCLEOTIDE SEQUENCE [MRNA]</scope>
    <scope>FUNCTION</scope>
    <scope>INDUCTION</scope>
</reference>
<reference key="2">
    <citation type="journal article" date="2019" name="J. Am. Chem. Soc.">
        <title>Efficient reconstitution of basidiomycota diterpene erinacine gene cluster in ascomycota host Aspergillus oryzae based on genomic DNA sequences.</title>
        <authorList>
            <person name="Liu C."/>
            <person name="Minami A."/>
            <person name="Ozaki T."/>
            <person name="Wu J."/>
            <person name="Kawagishi H."/>
            <person name="Maruyama J.I."/>
            <person name="Oikawa H."/>
        </authorList>
    </citation>
    <scope>FUNCTION</scope>
    <scope>CATALYTIC ACTIVITY</scope>
    <scope>PATHWAY</scope>
</reference>
<keyword id="KW-0349">Heme</keyword>
<keyword id="KW-0408">Iron</keyword>
<keyword id="KW-0472">Membrane</keyword>
<keyword id="KW-0479">Metal-binding</keyword>
<keyword id="KW-0503">Monooxygenase</keyword>
<keyword id="KW-0560">Oxidoreductase</keyword>
<keyword id="KW-0812">Transmembrane</keyword>
<keyword id="KW-1133">Transmembrane helix</keyword>
<comment type="function">
    <text evidence="3 4 7">Cytochrome P450 monooxygenase; part of the gene cluster that mediates the biosynthesis of erinacines, cyathane-xylosides that show unique biological activities, including leishmanicidal activity, stimulating activity for nerve growth-factor synthesis, and agonistic activity toward the kappa opioid receptor (PubMed:28371074, PubMed:31535864). Within the pathway, eriC hydroxylates erinacol at C-15 of the seven-membered ring to yield cyathadiol (PubMed:31535864). The first step of the erinacines biosynthesis pathway is catalyzed by the geranylgeranyl diphosphate (GGPP) synthase eriE via conversion of farnesyl pyrophosphate and isopentyl pyrophosphate into geranylgeranyl pyrophosphate (GGPP). GGPP is then substrate of the diterpene cyclase eriG for the production of cyatha-3,12-diene. The cytochrome P450 monooxygenase eriI then hydroxylates cyatha-3,12-diene at C-14 of the seven-membered ring to produce erinacol, which is further hydroxylated at C-15 by the cytochrome P450 monooxygenase eriC to yield cyathadiol. The cytochrome P450 monooxygenase eriA then catalyzes C-11 hydroxylation in the presence of the short chain dehydrogenase/reductase (SDR) eriH, which leads to the production of cyathatriol. The acetyltransferase eriL converts cyathatriol into 11-O-acetyl-cyathatriol. The SDR eriH catalyzes further oxidation of 11-O-acetyl-cyathatriol into 1-O-acetylcyathin A3. Finally, the glycosyl transferase eriJ tranfers xylose from UDP-xylose onto C-14 of 11-O-acetyl-cyathatriol to form eracine Q. EriJ is also able to convert 11-O-acetyl-cyathatriol to eracine Q2 by using UDP-D-glucose as cosubstrate, but at a lower rate (Probable).</text>
</comment>
<comment type="catalytic activity">
    <reaction evidence="4">
        <text>erinacol + reduced [NADPH--hemoprotein reductase] + O2 = cyathadiol + oxidized [NADPH--hemoprotein reductase] + H2O + H(+)</text>
        <dbReference type="Rhea" id="RHEA:75559"/>
        <dbReference type="Rhea" id="RHEA-COMP:11964"/>
        <dbReference type="Rhea" id="RHEA-COMP:11965"/>
        <dbReference type="ChEBI" id="CHEBI:15377"/>
        <dbReference type="ChEBI" id="CHEBI:15378"/>
        <dbReference type="ChEBI" id="CHEBI:15379"/>
        <dbReference type="ChEBI" id="CHEBI:57618"/>
        <dbReference type="ChEBI" id="CHEBI:58210"/>
        <dbReference type="ChEBI" id="CHEBI:194345"/>
        <dbReference type="ChEBI" id="CHEBI:194346"/>
    </reaction>
    <physiologicalReaction direction="left-to-right" evidence="4">
        <dbReference type="Rhea" id="RHEA:75560"/>
    </physiologicalReaction>
</comment>
<comment type="cofactor">
    <cofactor evidence="1">
        <name>heme</name>
        <dbReference type="ChEBI" id="CHEBI:30413"/>
    </cofactor>
</comment>
<comment type="pathway">
    <text evidence="4">Secondary metabolite biosynthesis.</text>
</comment>
<comment type="subcellular location">
    <subcellularLocation>
        <location evidence="2">Membrane</location>
        <topology evidence="2">Single-pass membrane protein</topology>
    </subcellularLocation>
</comment>
<comment type="induction">
    <text evidence="3">Expression is induced under erinacine P-producing conditions.</text>
</comment>
<comment type="similarity">
    <text evidence="6">Belongs to the cytochrome P450 family.</text>
</comment>
<name>ERIC_HERER</name>
<evidence type="ECO:0000250" key="1">
    <source>
        <dbReference type="UniProtKB" id="P04798"/>
    </source>
</evidence>
<evidence type="ECO:0000255" key="2"/>
<evidence type="ECO:0000269" key="3">
    <source>
    </source>
</evidence>
<evidence type="ECO:0000269" key="4">
    <source>
    </source>
</evidence>
<evidence type="ECO:0000303" key="5">
    <source>
    </source>
</evidence>
<evidence type="ECO:0000305" key="6"/>
<evidence type="ECO:0000305" key="7">
    <source>
    </source>
</evidence>
<accession>A0A1V0QSB7</accession>
<organism>
    <name type="scientific">Hericium erinaceus</name>
    <name type="common">Lion's mane mushroom</name>
    <name type="synonym">Hydnum erinaceus</name>
    <dbReference type="NCBI Taxonomy" id="91752"/>
    <lineage>
        <taxon>Eukaryota</taxon>
        <taxon>Fungi</taxon>
        <taxon>Dikarya</taxon>
        <taxon>Basidiomycota</taxon>
        <taxon>Agaricomycotina</taxon>
        <taxon>Agaricomycetes</taxon>
        <taxon>Russulales</taxon>
        <taxon>Hericiaceae</taxon>
        <taxon>Hericium</taxon>
    </lineage>
</organism>